<reference key="1">
    <citation type="journal article" date="2005" name="Arch. Microbiol.">
        <title>The genome sequence of an anaerobic aromatic-degrading denitrifying bacterium, strain EbN1.</title>
        <authorList>
            <person name="Rabus R."/>
            <person name="Kube M."/>
            <person name="Heider J."/>
            <person name="Beck A."/>
            <person name="Heitmann K."/>
            <person name="Widdel F."/>
            <person name="Reinhardt R."/>
        </authorList>
    </citation>
    <scope>NUCLEOTIDE SEQUENCE [LARGE SCALE GENOMIC DNA]</scope>
    <source>
        <strain>DSM 19018 / LMG 30748 / EbN1</strain>
    </source>
</reference>
<protein>
    <recommendedName>
        <fullName evidence="1">Elongation factor G</fullName>
        <shortName evidence="1">EF-G</shortName>
    </recommendedName>
</protein>
<sequence>MARKTPIERYRNIGISAHIDAGKTTTTERILFYTGVNHKIGEVHDGAATMDWMEQEQERGITITSAATTCFWKGMEMSFPEHRFNIIDTPGHVDFTIEVERSMRVLDGACMVYCAVGGVQPQSETVWRQATKYKVPRLAFVNKMDRQGANFFKVVEQMKLRLKANPVPIVIPIGAEENFVGVVDLVRMKAIYWDEASQGMKFDYREIPGELQATAEEWREKMLEAAAEASEELMNEYLENGDLSHEKIVAGLRQRTIACEIQPMLCGTAFKNKGVQRMLDAVIELLPSPVDIPPVAGIDDYEKPVERRADDSEKFAALAFKLMTDPFVGQLTFVRVYSGVLKSGETVLNSVKGKKERIGRILQMHANERQEIKEVLAGDIAACVGLKEVTTGETLCDPSAPIILERMVFPEPVIHVAVEPKTKADQEKMGIALGRLAAEDPSFRVRTDEESGQTIISGMGELHLEILVDRMKREFNVEATVGAPQVAYREAIRKPVEQEGKFVKQSGGRGQFGHVWIKLEPNETGKGYEFIDAIKGGVVPREYIPAVDKGLQETLPNGVLAGFPVVDVKVTLFDGSYHDVDSNENAFKMAASMAFKDAMRKASPVLLEPMMAVVVETPEDYMGNVMGDLSGRRGIVQGMDDLPGGMKEVKAEVPLAEMFGYATQLRSLTQGRATYSMEFKHYSEAPKSVAEAVINNRK</sequence>
<comment type="function">
    <text evidence="1">Catalyzes the GTP-dependent ribosomal translocation step during translation elongation. During this step, the ribosome changes from the pre-translocational (PRE) to the post-translocational (POST) state as the newly formed A-site-bound peptidyl-tRNA and P-site-bound deacylated tRNA move to the P and E sites, respectively. Catalyzes the coordinated movement of the two tRNA molecules, the mRNA and conformational changes in the ribosome.</text>
</comment>
<comment type="subcellular location">
    <subcellularLocation>
        <location evidence="1">Cytoplasm</location>
    </subcellularLocation>
</comment>
<comment type="similarity">
    <text evidence="1">Belongs to the TRAFAC class translation factor GTPase superfamily. Classic translation factor GTPase family. EF-G/EF-2 subfamily.</text>
</comment>
<evidence type="ECO:0000255" key="1">
    <source>
        <dbReference type="HAMAP-Rule" id="MF_00054"/>
    </source>
</evidence>
<organism>
    <name type="scientific">Aromatoleum aromaticum (strain DSM 19018 / LMG 30748 / EbN1)</name>
    <name type="common">Azoarcus sp. (strain EbN1)</name>
    <dbReference type="NCBI Taxonomy" id="76114"/>
    <lineage>
        <taxon>Bacteria</taxon>
        <taxon>Pseudomonadati</taxon>
        <taxon>Pseudomonadota</taxon>
        <taxon>Betaproteobacteria</taxon>
        <taxon>Rhodocyclales</taxon>
        <taxon>Rhodocyclaceae</taxon>
        <taxon>Aromatoleum</taxon>
    </lineage>
</organism>
<gene>
    <name evidence="1" type="primary">fusA</name>
    <name type="ordered locus">AZOSEA21540</name>
    <name type="ORF">ebA3824</name>
</gene>
<dbReference type="EMBL" id="CR555306">
    <property type="protein sequence ID" value="CAI08279.1"/>
    <property type="molecule type" value="Genomic_DNA"/>
</dbReference>
<dbReference type="RefSeq" id="WP_011237970.1">
    <property type="nucleotide sequence ID" value="NC_006513.1"/>
</dbReference>
<dbReference type="SMR" id="Q5P335"/>
<dbReference type="STRING" id="76114.ebA3824"/>
<dbReference type="KEGG" id="eba:ebA3824"/>
<dbReference type="eggNOG" id="COG0480">
    <property type="taxonomic scope" value="Bacteria"/>
</dbReference>
<dbReference type="HOGENOM" id="CLU_002794_4_1_4"/>
<dbReference type="OrthoDB" id="9804431at2"/>
<dbReference type="Proteomes" id="UP000006552">
    <property type="component" value="Chromosome"/>
</dbReference>
<dbReference type="GO" id="GO:0005737">
    <property type="term" value="C:cytoplasm"/>
    <property type="evidence" value="ECO:0007669"/>
    <property type="project" value="UniProtKB-SubCell"/>
</dbReference>
<dbReference type="GO" id="GO:0005525">
    <property type="term" value="F:GTP binding"/>
    <property type="evidence" value="ECO:0007669"/>
    <property type="project" value="UniProtKB-UniRule"/>
</dbReference>
<dbReference type="GO" id="GO:0003924">
    <property type="term" value="F:GTPase activity"/>
    <property type="evidence" value="ECO:0007669"/>
    <property type="project" value="InterPro"/>
</dbReference>
<dbReference type="GO" id="GO:0097216">
    <property type="term" value="F:guanosine tetraphosphate binding"/>
    <property type="evidence" value="ECO:0007669"/>
    <property type="project" value="UniProtKB-ARBA"/>
</dbReference>
<dbReference type="GO" id="GO:0003746">
    <property type="term" value="F:translation elongation factor activity"/>
    <property type="evidence" value="ECO:0007669"/>
    <property type="project" value="UniProtKB-UniRule"/>
</dbReference>
<dbReference type="GO" id="GO:0032790">
    <property type="term" value="P:ribosome disassembly"/>
    <property type="evidence" value="ECO:0007669"/>
    <property type="project" value="TreeGrafter"/>
</dbReference>
<dbReference type="CDD" id="cd01886">
    <property type="entry name" value="EF-G"/>
    <property type="match status" value="1"/>
</dbReference>
<dbReference type="CDD" id="cd16262">
    <property type="entry name" value="EFG_III"/>
    <property type="match status" value="1"/>
</dbReference>
<dbReference type="CDD" id="cd01434">
    <property type="entry name" value="EFG_mtEFG1_IV"/>
    <property type="match status" value="1"/>
</dbReference>
<dbReference type="CDD" id="cd03713">
    <property type="entry name" value="EFG_mtEFG_C"/>
    <property type="match status" value="1"/>
</dbReference>
<dbReference type="CDD" id="cd04088">
    <property type="entry name" value="EFG_mtEFG_II"/>
    <property type="match status" value="1"/>
</dbReference>
<dbReference type="FunFam" id="2.40.30.10:FF:000006">
    <property type="entry name" value="Elongation factor G"/>
    <property type="match status" value="1"/>
</dbReference>
<dbReference type="FunFam" id="3.30.230.10:FF:000003">
    <property type="entry name" value="Elongation factor G"/>
    <property type="match status" value="1"/>
</dbReference>
<dbReference type="FunFam" id="3.30.70.240:FF:000001">
    <property type="entry name" value="Elongation factor G"/>
    <property type="match status" value="1"/>
</dbReference>
<dbReference type="FunFam" id="3.30.70.870:FF:000001">
    <property type="entry name" value="Elongation factor G"/>
    <property type="match status" value="1"/>
</dbReference>
<dbReference type="FunFam" id="3.40.50.300:FF:000029">
    <property type="entry name" value="Elongation factor G"/>
    <property type="match status" value="1"/>
</dbReference>
<dbReference type="Gene3D" id="3.30.230.10">
    <property type="match status" value="1"/>
</dbReference>
<dbReference type="Gene3D" id="3.30.70.240">
    <property type="match status" value="1"/>
</dbReference>
<dbReference type="Gene3D" id="3.30.70.870">
    <property type="entry name" value="Elongation Factor G (Translational Gtpase), domain 3"/>
    <property type="match status" value="1"/>
</dbReference>
<dbReference type="Gene3D" id="3.40.50.300">
    <property type="entry name" value="P-loop containing nucleotide triphosphate hydrolases"/>
    <property type="match status" value="1"/>
</dbReference>
<dbReference type="Gene3D" id="2.40.30.10">
    <property type="entry name" value="Translation factors"/>
    <property type="match status" value="1"/>
</dbReference>
<dbReference type="HAMAP" id="MF_00054_B">
    <property type="entry name" value="EF_G_EF_2_B"/>
    <property type="match status" value="1"/>
</dbReference>
<dbReference type="InterPro" id="IPR041095">
    <property type="entry name" value="EFG_II"/>
</dbReference>
<dbReference type="InterPro" id="IPR009022">
    <property type="entry name" value="EFG_III"/>
</dbReference>
<dbReference type="InterPro" id="IPR035647">
    <property type="entry name" value="EFG_III/V"/>
</dbReference>
<dbReference type="InterPro" id="IPR047872">
    <property type="entry name" value="EFG_IV"/>
</dbReference>
<dbReference type="InterPro" id="IPR035649">
    <property type="entry name" value="EFG_V"/>
</dbReference>
<dbReference type="InterPro" id="IPR000640">
    <property type="entry name" value="EFG_V-like"/>
</dbReference>
<dbReference type="InterPro" id="IPR004161">
    <property type="entry name" value="EFTu-like_2"/>
</dbReference>
<dbReference type="InterPro" id="IPR031157">
    <property type="entry name" value="G_TR_CS"/>
</dbReference>
<dbReference type="InterPro" id="IPR027417">
    <property type="entry name" value="P-loop_NTPase"/>
</dbReference>
<dbReference type="InterPro" id="IPR020568">
    <property type="entry name" value="Ribosomal_Su5_D2-typ_SF"/>
</dbReference>
<dbReference type="InterPro" id="IPR014721">
    <property type="entry name" value="Ribsml_uS5_D2-typ_fold_subgr"/>
</dbReference>
<dbReference type="InterPro" id="IPR005225">
    <property type="entry name" value="Small_GTP-bd"/>
</dbReference>
<dbReference type="InterPro" id="IPR000795">
    <property type="entry name" value="T_Tr_GTP-bd_dom"/>
</dbReference>
<dbReference type="InterPro" id="IPR009000">
    <property type="entry name" value="Transl_B-barrel_sf"/>
</dbReference>
<dbReference type="InterPro" id="IPR004540">
    <property type="entry name" value="Transl_elong_EFG/EF2"/>
</dbReference>
<dbReference type="InterPro" id="IPR005517">
    <property type="entry name" value="Transl_elong_EFG/EF2_IV"/>
</dbReference>
<dbReference type="NCBIfam" id="TIGR00484">
    <property type="entry name" value="EF-G"/>
    <property type="match status" value="1"/>
</dbReference>
<dbReference type="NCBIfam" id="NF009379">
    <property type="entry name" value="PRK12740.1-3"/>
    <property type="match status" value="1"/>
</dbReference>
<dbReference type="NCBIfam" id="NF009381">
    <property type="entry name" value="PRK12740.1-5"/>
    <property type="match status" value="1"/>
</dbReference>
<dbReference type="NCBIfam" id="TIGR00231">
    <property type="entry name" value="small_GTP"/>
    <property type="match status" value="1"/>
</dbReference>
<dbReference type="PANTHER" id="PTHR43261:SF1">
    <property type="entry name" value="RIBOSOME-RELEASING FACTOR 2, MITOCHONDRIAL"/>
    <property type="match status" value="1"/>
</dbReference>
<dbReference type="PANTHER" id="PTHR43261">
    <property type="entry name" value="TRANSLATION ELONGATION FACTOR G-RELATED"/>
    <property type="match status" value="1"/>
</dbReference>
<dbReference type="Pfam" id="PF00679">
    <property type="entry name" value="EFG_C"/>
    <property type="match status" value="1"/>
</dbReference>
<dbReference type="Pfam" id="PF14492">
    <property type="entry name" value="EFG_III"/>
    <property type="match status" value="1"/>
</dbReference>
<dbReference type="Pfam" id="PF03764">
    <property type="entry name" value="EFG_IV"/>
    <property type="match status" value="1"/>
</dbReference>
<dbReference type="Pfam" id="PF00009">
    <property type="entry name" value="GTP_EFTU"/>
    <property type="match status" value="1"/>
</dbReference>
<dbReference type="Pfam" id="PF03144">
    <property type="entry name" value="GTP_EFTU_D2"/>
    <property type="match status" value="1"/>
</dbReference>
<dbReference type="PRINTS" id="PR00315">
    <property type="entry name" value="ELONGATNFCT"/>
</dbReference>
<dbReference type="SMART" id="SM00838">
    <property type="entry name" value="EFG_C"/>
    <property type="match status" value="1"/>
</dbReference>
<dbReference type="SMART" id="SM00889">
    <property type="entry name" value="EFG_IV"/>
    <property type="match status" value="1"/>
</dbReference>
<dbReference type="SUPFAM" id="SSF54980">
    <property type="entry name" value="EF-G C-terminal domain-like"/>
    <property type="match status" value="2"/>
</dbReference>
<dbReference type="SUPFAM" id="SSF52540">
    <property type="entry name" value="P-loop containing nucleoside triphosphate hydrolases"/>
    <property type="match status" value="1"/>
</dbReference>
<dbReference type="SUPFAM" id="SSF54211">
    <property type="entry name" value="Ribosomal protein S5 domain 2-like"/>
    <property type="match status" value="1"/>
</dbReference>
<dbReference type="SUPFAM" id="SSF50447">
    <property type="entry name" value="Translation proteins"/>
    <property type="match status" value="1"/>
</dbReference>
<dbReference type="PROSITE" id="PS00301">
    <property type="entry name" value="G_TR_1"/>
    <property type="match status" value="1"/>
</dbReference>
<dbReference type="PROSITE" id="PS51722">
    <property type="entry name" value="G_TR_2"/>
    <property type="match status" value="1"/>
</dbReference>
<proteinExistence type="inferred from homology"/>
<keyword id="KW-0963">Cytoplasm</keyword>
<keyword id="KW-0251">Elongation factor</keyword>
<keyword id="KW-0342">GTP-binding</keyword>
<keyword id="KW-0547">Nucleotide-binding</keyword>
<keyword id="KW-0648">Protein biosynthesis</keyword>
<keyword id="KW-1185">Reference proteome</keyword>
<accession>Q5P335</accession>
<name>EFG_AROAE</name>
<feature type="chain" id="PRO_0000091060" description="Elongation factor G">
    <location>
        <begin position="1"/>
        <end position="698"/>
    </location>
</feature>
<feature type="domain" description="tr-type G">
    <location>
        <begin position="8"/>
        <end position="290"/>
    </location>
</feature>
<feature type="binding site" evidence="1">
    <location>
        <begin position="17"/>
        <end position="24"/>
    </location>
    <ligand>
        <name>GTP</name>
        <dbReference type="ChEBI" id="CHEBI:37565"/>
    </ligand>
</feature>
<feature type="binding site" evidence="1">
    <location>
        <begin position="88"/>
        <end position="92"/>
    </location>
    <ligand>
        <name>GTP</name>
        <dbReference type="ChEBI" id="CHEBI:37565"/>
    </ligand>
</feature>
<feature type="binding site" evidence="1">
    <location>
        <begin position="142"/>
        <end position="145"/>
    </location>
    <ligand>
        <name>GTP</name>
        <dbReference type="ChEBI" id="CHEBI:37565"/>
    </ligand>
</feature>